<proteinExistence type="evidence at transcript level"/>
<organism>
    <name type="scientific">Cavia porcellus</name>
    <name type="common">Guinea pig</name>
    <dbReference type="NCBI Taxonomy" id="10141"/>
    <lineage>
        <taxon>Eukaryota</taxon>
        <taxon>Metazoa</taxon>
        <taxon>Chordata</taxon>
        <taxon>Craniata</taxon>
        <taxon>Vertebrata</taxon>
        <taxon>Euteleostomi</taxon>
        <taxon>Mammalia</taxon>
        <taxon>Eutheria</taxon>
        <taxon>Euarchontoglires</taxon>
        <taxon>Glires</taxon>
        <taxon>Rodentia</taxon>
        <taxon>Hystricomorpha</taxon>
        <taxon>Caviidae</taxon>
        <taxon>Cavia</taxon>
    </lineage>
</organism>
<sequence length="473" mass="52576">MAPALPWLLLWVGSGVLPVHGTQDGIRLPLRSGLAGAPLGLRLPRETDEEPGRRGSFVEMVDNLRGKSGQGYYVEMTVGSPPQTLNILVDTGSSNFAVGAAPHPFLHRYYQRQRSSTYRDLRKGVYVPYTQGKWEGELGTDLVSIPHGPNVTVRANIAAITESDKFFINGSNWEGILGLAYAEIARLCGAGFPLNQSEAVASVGGSMIIGGIDHSLYTGNLWYTPIRREWYYEVIIVRVEINGQDLKMDCKEYNYDKSIVDSGTTNLRLPKKVFEAAVKSIKAASSTEKFPDGFWLGEQLVCWQAGTTPWNIFPVISLYLMGEVTNQSFRITILPQQYLRPVEDVATSQDDCYKFAISQSSTGTVMGAVIMEGFYVVFDRARKRIGFAVSACHVHDEFRTATVEGPFVTPDMEDCGYNIPQTDESTLMTIAYVMAAICALFMLPLCLMVCQWRCLRCLRHQHDDFADDISLLK</sequence>
<gene>
    <name type="primary">BACE1</name>
</gene>
<reference key="1">
    <citation type="submission" date="2006-04" db="EMBL/GenBank/DDBJ databases">
        <title>Beta-site amyloid precursor protein cleaving enzyme 1 (BACE1) mRNA from guinea pig.</title>
        <authorList>
            <person name="Christensen S."/>
        </authorList>
    </citation>
    <scope>NUCLEOTIDE SEQUENCE [MRNA]</scope>
</reference>
<name>BACE1_CAVPO</name>
<accession>Q1KLR6</accession>
<dbReference type="EC" id="3.4.23.46" evidence="2"/>
<dbReference type="EMBL" id="DQ471956">
    <property type="protein sequence ID" value="ABF13340.1"/>
    <property type="molecule type" value="mRNA"/>
</dbReference>
<dbReference type="RefSeq" id="NP_001166390.1">
    <property type="nucleotide sequence ID" value="NM_001172919.1"/>
</dbReference>
<dbReference type="SMR" id="Q1KLR6"/>
<dbReference type="STRING" id="10141.ENSCPOP00000011476"/>
<dbReference type="MEROPS" id="A01.004"/>
<dbReference type="GlyCosmos" id="Q1KLR6">
    <property type="glycosylation" value="4 sites, No reported glycans"/>
</dbReference>
<dbReference type="GeneID" id="100135485"/>
<dbReference type="KEGG" id="cpoc:100135485"/>
<dbReference type="CTD" id="23621"/>
<dbReference type="eggNOG" id="KOG1339">
    <property type="taxonomic scope" value="Eukaryota"/>
</dbReference>
<dbReference type="HOGENOM" id="CLU_039009_0_0_1"/>
<dbReference type="InParanoid" id="Q1KLR6"/>
<dbReference type="OrthoDB" id="2747330at2759"/>
<dbReference type="TreeFam" id="TF329595"/>
<dbReference type="Proteomes" id="UP000005447">
    <property type="component" value="Unassembled WGS sequence"/>
</dbReference>
<dbReference type="GO" id="GO:0030424">
    <property type="term" value="C:axon"/>
    <property type="evidence" value="ECO:0007669"/>
    <property type="project" value="UniProtKB-SubCell"/>
</dbReference>
<dbReference type="GO" id="GO:0009986">
    <property type="term" value="C:cell surface"/>
    <property type="evidence" value="ECO:0000250"/>
    <property type="project" value="UniProtKB"/>
</dbReference>
<dbReference type="GO" id="GO:0030659">
    <property type="term" value="C:cytoplasmic vesicle membrane"/>
    <property type="evidence" value="ECO:0007669"/>
    <property type="project" value="UniProtKB-SubCell"/>
</dbReference>
<dbReference type="GO" id="GO:0030425">
    <property type="term" value="C:dendrite"/>
    <property type="evidence" value="ECO:0007669"/>
    <property type="project" value="UniProtKB-SubCell"/>
</dbReference>
<dbReference type="GO" id="GO:0005769">
    <property type="term" value="C:early endosome"/>
    <property type="evidence" value="ECO:0000250"/>
    <property type="project" value="UniProtKB"/>
</dbReference>
<dbReference type="GO" id="GO:0005783">
    <property type="term" value="C:endoplasmic reticulum"/>
    <property type="evidence" value="ECO:0007669"/>
    <property type="project" value="UniProtKB-SubCell"/>
</dbReference>
<dbReference type="GO" id="GO:0005768">
    <property type="term" value="C:endosome"/>
    <property type="evidence" value="ECO:0000250"/>
    <property type="project" value="UniProtKB"/>
</dbReference>
<dbReference type="GO" id="GO:0005794">
    <property type="term" value="C:Golgi apparatus"/>
    <property type="evidence" value="ECO:0000250"/>
    <property type="project" value="UniProtKB"/>
</dbReference>
<dbReference type="GO" id="GO:0005770">
    <property type="term" value="C:late endosome"/>
    <property type="evidence" value="ECO:0000250"/>
    <property type="project" value="UniProtKB"/>
</dbReference>
<dbReference type="GO" id="GO:0005764">
    <property type="term" value="C:lysosome"/>
    <property type="evidence" value="ECO:0000250"/>
    <property type="project" value="UniProtKB"/>
</dbReference>
<dbReference type="GO" id="GO:0045121">
    <property type="term" value="C:membrane raft"/>
    <property type="evidence" value="ECO:0007669"/>
    <property type="project" value="UniProtKB-SubCell"/>
</dbReference>
<dbReference type="GO" id="GO:0005886">
    <property type="term" value="C:plasma membrane"/>
    <property type="evidence" value="ECO:0007669"/>
    <property type="project" value="UniProtKB-SubCell"/>
</dbReference>
<dbReference type="GO" id="GO:0055037">
    <property type="term" value="C:recycling endosome"/>
    <property type="evidence" value="ECO:0000250"/>
    <property type="project" value="UniProtKB"/>
</dbReference>
<dbReference type="GO" id="GO:0005802">
    <property type="term" value="C:trans-Golgi network"/>
    <property type="evidence" value="ECO:0000250"/>
    <property type="project" value="UniProtKB"/>
</dbReference>
<dbReference type="GO" id="GO:0004190">
    <property type="term" value="F:aspartic-type endopeptidase activity"/>
    <property type="evidence" value="ECO:0000250"/>
    <property type="project" value="UniProtKB"/>
</dbReference>
<dbReference type="GO" id="GO:0004175">
    <property type="term" value="F:endopeptidase activity"/>
    <property type="evidence" value="ECO:0000250"/>
    <property type="project" value="UniProtKB"/>
</dbReference>
<dbReference type="GO" id="GO:0050435">
    <property type="term" value="P:amyloid-beta metabolic process"/>
    <property type="evidence" value="ECO:0000250"/>
    <property type="project" value="UniProtKB"/>
</dbReference>
<dbReference type="GO" id="GO:0006509">
    <property type="term" value="P:membrane protein ectodomain proteolysis"/>
    <property type="evidence" value="ECO:0007669"/>
    <property type="project" value="TreeGrafter"/>
</dbReference>
<dbReference type="GO" id="GO:0006508">
    <property type="term" value="P:proteolysis"/>
    <property type="evidence" value="ECO:0000250"/>
    <property type="project" value="UniProtKB"/>
</dbReference>
<dbReference type="CDD" id="cd05473">
    <property type="entry name" value="beta_secretase_like"/>
    <property type="match status" value="1"/>
</dbReference>
<dbReference type="FunFam" id="2.40.70.10:FF:000003">
    <property type="entry name" value="Beta-secretase 1"/>
    <property type="match status" value="1"/>
</dbReference>
<dbReference type="Gene3D" id="2.40.70.10">
    <property type="entry name" value="Acid Proteases"/>
    <property type="match status" value="2"/>
</dbReference>
<dbReference type="InterPro" id="IPR001461">
    <property type="entry name" value="Aspartic_peptidase_A1"/>
</dbReference>
<dbReference type="InterPro" id="IPR001969">
    <property type="entry name" value="Aspartic_peptidase_AS"/>
</dbReference>
<dbReference type="InterPro" id="IPR009119">
    <property type="entry name" value="BACE"/>
</dbReference>
<dbReference type="InterPro" id="IPR009120">
    <property type="entry name" value="BACE1"/>
</dbReference>
<dbReference type="InterPro" id="IPR033874">
    <property type="entry name" value="Memapsin-like"/>
</dbReference>
<dbReference type="InterPro" id="IPR033121">
    <property type="entry name" value="PEPTIDASE_A1"/>
</dbReference>
<dbReference type="InterPro" id="IPR021109">
    <property type="entry name" value="Peptidase_aspartic_dom_sf"/>
</dbReference>
<dbReference type="PANTHER" id="PTHR47965">
    <property type="entry name" value="ASPARTYL PROTEASE-RELATED"/>
    <property type="match status" value="1"/>
</dbReference>
<dbReference type="PANTHER" id="PTHR47965:SF69">
    <property type="entry name" value="BETA-SECRETASE 1"/>
    <property type="match status" value="1"/>
</dbReference>
<dbReference type="Pfam" id="PF00026">
    <property type="entry name" value="Asp"/>
    <property type="match status" value="1"/>
</dbReference>
<dbReference type="PRINTS" id="PR01816">
    <property type="entry name" value="BACE1"/>
</dbReference>
<dbReference type="PRINTS" id="PR01815">
    <property type="entry name" value="BACEFAMILY"/>
</dbReference>
<dbReference type="PRINTS" id="PR00792">
    <property type="entry name" value="PEPSIN"/>
</dbReference>
<dbReference type="SUPFAM" id="SSF50630">
    <property type="entry name" value="Acid proteases"/>
    <property type="match status" value="1"/>
</dbReference>
<dbReference type="PROSITE" id="PS00141">
    <property type="entry name" value="ASP_PROTEASE"/>
    <property type="match status" value="1"/>
</dbReference>
<dbReference type="PROSITE" id="PS51767">
    <property type="entry name" value="PEPTIDASE_A1"/>
    <property type="match status" value="1"/>
</dbReference>
<evidence type="ECO:0000250" key="1"/>
<evidence type="ECO:0000250" key="2">
    <source>
        <dbReference type="UniProtKB" id="P56817"/>
    </source>
</evidence>
<evidence type="ECO:0000250" key="3">
    <source>
        <dbReference type="UniProtKB" id="P56818"/>
    </source>
</evidence>
<evidence type="ECO:0000255" key="4"/>
<evidence type="ECO:0000255" key="5">
    <source>
        <dbReference type="PROSITE-ProRule" id="PRU01103"/>
    </source>
</evidence>
<evidence type="ECO:0000255" key="6">
    <source>
        <dbReference type="PROSITE-ProRule" id="PRU10094"/>
    </source>
</evidence>
<evidence type="ECO:0000305" key="7"/>
<protein>
    <recommendedName>
        <fullName>Beta-secretase 1</fullName>
        <ecNumber evidence="2">3.4.23.46</ecNumber>
    </recommendedName>
    <alternativeName>
        <fullName>Beta-site amyloid precursor protein cleaving enzyme 1</fullName>
        <shortName>Beta-site APP cleaving enzyme 1</shortName>
    </alternativeName>
    <alternativeName>
        <fullName>Memapsin-2</fullName>
    </alternativeName>
    <alternativeName>
        <fullName>Membrane-associated aspartic protease 2</fullName>
    </alternativeName>
</protein>
<comment type="function">
    <text evidence="2 3">Responsible for the proteolytic processing of the amyloid precursor protein (APP). Cleaves at the N-terminus of the A-beta peptide sequence, between residues 671 and 672 of APP, leads to the generation and extracellular release of beta-cleaved soluble APP, and a corresponding cell-associated C-terminal fragment which is later released by gamma-secretase (By similarity). Cleaves CHL1 (By similarity).</text>
</comment>
<comment type="catalytic activity">
    <reaction evidence="2">
        <text>Broad endopeptidase specificity. Cleaves Glu-Val-Asn-Leu-|-Asp-Ala-Glu-Phe in the Swedish variant of Alzheimer's amyloid precursor protein.</text>
        <dbReference type="EC" id="3.4.23.46"/>
    </reaction>
</comment>
<comment type="activity regulation">
    <text evidence="2">Inhibited by RTN3 and RTN4.</text>
</comment>
<comment type="subunit">
    <text evidence="2 3">Monomer. Interacts (via DXXLL motif) with GGA1, GGA2 and GGA3 (via their VHS domain); the interaction highly increases when BACE1 is phosphorylated at Ser-470. Interacts with RTN1; RTN2; RTN3 and RTN4; the interaction leads to inhibition of amyloid precursor protein processing (By similarity). Interacts with SNX6. Interacts with PCSK9. Interacts with NAT8 and NAT8B. Interacts with BIN1 (By similarity). Interacts (via extracellular domain) with ADAM10 (via extracellular domain) (By similarity). Interacts with SORL1; this interaction may affect binding with APP and hence reduce APP cleavage (By similarity). Interacts with NRDC AND NRG1 (By similarity).</text>
</comment>
<comment type="subcellular location">
    <subcellularLocation>
        <location evidence="2">Cell membrane</location>
        <topology evidence="2">Single-pass type I membrane protein</topology>
    </subcellularLocation>
    <subcellularLocation>
        <location evidence="2">Golgi apparatus</location>
        <location evidence="2">trans-Golgi network</location>
    </subcellularLocation>
    <subcellularLocation>
        <location evidence="2">Endoplasmic reticulum</location>
    </subcellularLocation>
    <subcellularLocation>
        <location evidence="2">Endosome</location>
    </subcellularLocation>
    <subcellularLocation>
        <location evidence="2">Cell surface</location>
    </subcellularLocation>
    <subcellularLocation>
        <location evidence="2">Cytoplasmic vesicle membrane</location>
        <topology evidence="2">Single-pass type I membrane protein</topology>
    </subcellularLocation>
    <subcellularLocation>
        <location evidence="3">Membrane raft</location>
    </subcellularLocation>
    <subcellularLocation>
        <location evidence="2">Lysosome</location>
    </subcellularLocation>
    <subcellularLocation>
        <location evidence="2">Late endosome</location>
    </subcellularLocation>
    <subcellularLocation>
        <location evidence="2">Early endosome</location>
    </subcellularLocation>
    <subcellularLocation>
        <location evidence="2">Recycling endosome</location>
    </subcellularLocation>
    <subcellularLocation>
        <location evidence="3">Cell projection</location>
        <location evidence="3">Axon</location>
    </subcellularLocation>
    <subcellularLocation>
        <location evidence="3">Cell projection</location>
        <location evidence="3">Dendrite</location>
    </subcellularLocation>
    <text evidence="2 3">Predominantly localized to the later Golgi/trans-Golgi network (TGN) and minimally detectable in the early Golgi compartments. A small portion is also found in the endoplasmic reticulum, endosomes and on the cell surface (By similarity). Colocalization with APP in early endosomes is due to addition of bisecting N-acetylglucosamine which blocks targeting to late endosomes and lysosomes (By similarity). Retrogradly transported from endosomal compartments to the trans-Golgi network in a phosphorylation- and GGA1- dependent manner (By similarity).</text>
</comment>
<comment type="domain">
    <text evidence="2">DXXLL motif is required for a proper endocytosis and retrograde transport to the trans-Golgi network, as well as for regulation of lysosomal degradation.</text>
</comment>
<comment type="domain">
    <text evidence="2">The transmembrane domain is necessary for its activity. It determines its late Golgi localization and access to its substrate, APP.</text>
</comment>
<comment type="PTM">
    <text evidence="3">Palmitoylation mediates lipid raft localization.</text>
</comment>
<comment type="PTM">
    <text evidence="2">Acetylated in the endoplasmic reticulum at Lys-123, Lys-247, Lys-251, Lys-257, Lys-271, Lys-272, and Lys-279. Acetylation by NAT8 and NAT8B is transient and deacetylation probably occurs in the Golgi. Acetylation regulates the maturation, the transport to the plasma membrane, the stability and the expression of the protein.</text>
</comment>
<comment type="PTM">
    <text evidence="2">Ubiquitinated at Lys-473, ubiquitination leads to lysosomal degradation. Monoubiquitinated and 'Lys-63'-linked polyubitinated. Deubiquitnated by USP8; inhibits lysosomal degradation.</text>
</comment>
<comment type="PTM">
    <text evidence="2">Phosphorylation at Ser-470 is required for interaction with GGA1 and retrograded transport from endosomal compartments to the trans-Golgi network. Non-phosphorylated BACE1 enters a direct recycling route to the cell surface.</text>
</comment>
<comment type="PTM">
    <text evidence="2 3">N-Glycosylated (By similarity). Addition of a bisecting N-acetylglucosamine by MGAT3 blocks lysosomal targeting, further degradation and is required for maintaining stability under stress conditions (By similarity).</text>
</comment>
<comment type="similarity">
    <text evidence="7">Belongs to the peptidase A1 family.</text>
</comment>
<feature type="signal peptide" evidence="4">
    <location>
        <begin position="1"/>
        <end position="21"/>
    </location>
</feature>
<feature type="propeptide" id="PRO_0000245804" evidence="1">
    <location>
        <begin position="22"/>
        <end position="45"/>
    </location>
</feature>
<feature type="chain" id="PRO_0000245805" description="Beta-secretase 1">
    <location>
        <begin position="46"/>
        <end position="473"/>
    </location>
</feature>
<feature type="topological domain" description="Extracellular" evidence="4">
    <location>
        <begin position="22"/>
        <end position="429"/>
    </location>
</feature>
<feature type="transmembrane region" description="Helical" evidence="4">
    <location>
        <begin position="430"/>
        <end position="450"/>
    </location>
</feature>
<feature type="topological domain" description="Cytoplasmic" evidence="4">
    <location>
        <begin position="451"/>
        <end position="473"/>
    </location>
</feature>
<feature type="domain" description="Peptidase A1" evidence="5">
    <location>
        <begin position="72"/>
        <end position="388"/>
    </location>
</feature>
<feature type="region of interest" description="Interaction with RTN3" evidence="1">
    <location>
        <begin position="451"/>
        <end position="473"/>
    </location>
</feature>
<feature type="short sequence motif" description="DXXLL" evidence="2">
    <location>
        <begin position="468"/>
        <end position="472"/>
    </location>
</feature>
<feature type="active site" evidence="6">
    <location>
        <position position="90"/>
    </location>
</feature>
<feature type="active site" evidence="6">
    <location>
        <position position="261"/>
    </location>
</feature>
<feature type="modified residue" description="N6-acetyllysine" evidence="2">
    <location>
        <position position="123"/>
    </location>
</feature>
<feature type="modified residue" description="N6-acetyllysine" evidence="2">
    <location>
        <position position="247"/>
    </location>
</feature>
<feature type="modified residue" description="N6-acetyllysine" evidence="2">
    <location>
        <position position="251"/>
    </location>
</feature>
<feature type="modified residue" description="N6-acetyllysine" evidence="2">
    <location>
        <position position="257"/>
    </location>
</feature>
<feature type="modified residue" description="N6-acetyllysine" evidence="2">
    <location>
        <position position="271"/>
    </location>
</feature>
<feature type="modified residue" description="N6-acetyllysine" evidence="2">
    <location>
        <position position="272"/>
    </location>
</feature>
<feature type="modified residue" description="N6-acetyllysine" evidence="2">
    <location>
        <position position="279"/>
    </location>
</feature>
<feature type="modified residue" description="Phosphoserine" evidence="3">
    <location>
        <position position="470"/>
    </location>
</feature>
<feature type="lipid moiety-binding region" description="S-palmitoyl cysteine" evidence="3">
    <location>
        <position position="446"/>
    </location>
</feature>
<feature type="lipid moiety-binding region" description="S-palmitoyl cysteine" evidence="3">
    <location>
        <position position="450"/>
    </location>
</feature>
<feature type="lipid moiety-binding region" description="S-palmitoyl cysteine" evidence="3">
    <location>
        <position position="454"/>
    </location>
</feature>
<feature type="lipid moiety-binding region" description="S-palmitoyl cysteine" evidence="3">
    <location>
        <position position="457"/>
    </location>
</feature>
<feature type="glycosylation site" description="N-linked (GlcNAc...) asparagine" evidence="4">
    <location>
        <position position="150"/>
    </location>
</feature>
<feature type="glycosylation site" description="N-linked (GlcNAc...) asparagine" evidence="4">
    <location>
        <position position="169"/>
    </location>
</feature>
<feature type="glycosylation site" description="N-linked (GlcNAc...) asparagine" evidence="4">
    <location>
        <position position="195"/>
    </location>
</feature>
<feature type="glycosylation site" description="N-linked (GlcNAc...) asparagine" evidence="4">
    <location>
        <position position="326"/>
    </location>
</feature>
<feature type="disulfide bond" evidence="1">
    <location>
        <begin position="188"/>
        <end position="392"/>
    </location>
</feature>
<feature type="disulfide bond" evidence="1">
    <location>
        <begin position="250"/>
        <end position="415"/>
    </location>
</feature>
<feature type="disulfide bond" evidence="1">
    <location>
        <begin position="302"/>
        <end position="352"/>
    </location>
</feature>
<feature type="cross-link" description="Glycyl lysine isopeptide (Lys-Gly) (interchain with G-Cter in ubiquitin)" evidence="2">
    <location>
        <position position="473"/>
    </location>
</feature>
<keyword id="KW-0007">Acetylation</keyword>
<keyword id="KW-0064">Aspartyl protease</keyword>
<keyword id="KW-1003">Cell membrane</keyword>
<keyword id="KW-0966">Cell projection</keyword>
<keyword id="KW-0968">Cytoplasmic vesicle</keyword>
<keyword id="KW-1015">Disulfide bond</keyword>
<keyword id="KW-0256">Endoplasmic reticulum</keyword>
<keyword id="KW-0967">Endosome</keyword>
<keyword id="KW-0325">Glycoprotein</keyword>
<keyword id="KW-0333">Golgi apparatus</keyword>
<keyword id="KW-0378">Hydrolase</keyword>
<keyword id="KW-1017">Isopeptide bond</keyword>
<keyword id="KW-0449">Lipoprotein</keyword>
<keyword id="KW-0458">Lysosome</keyword>
<keyword id="KW-0472">Membrane</keyword>
<keyword id="KW-0564">Palmitate</keyword>
<keyword id="KW-0597">Phosphoprotein</keyword>
<keyword id="KW-0645">Protease</keyword>
<keyword id="KW-1185">Reference proteome</keyword>
<keyword id="KW-0732">Signal</keyword>
<keyword id="KW-0812">Transmembrane</keyword>
<keyword id="KW-1133">Transmembrane helix</keyword>
<keyword id="KW-0832">Ubl conjugation</keyword>
<keyword id="KW-0865">Zymogen</keyword>